<evidence type="ECO:0000255" key="1">
    <source>
        <dbReference type="PROSITE-ProRule" id="PRU01026"/>
    </source>
</evidence>
<evidence type="ECO:0000256" key="2">
    <source>
        <dbReference type="SAM" id="MobiDB-lite"/>
    </source>
</evidence>
<evidence type="ECO:0000269" key="3">
    <source>
    </source>
</evidence>
<evidence type="ECO:0000269" key="4">
    <source>
    </source>
</evidence>
<evidence type="ECO:0000269" key="5">
    <source>
    </source>
</evidence>
<evidence type="ECO:0000269" key="6">
    <source ref="9"/>
</evidence>
<evidence type="ECO:0000305" key="7"/>
<evidence type="ECO:0000312" key="8">
    <source>
        <dbReference type="HGNC" id="HGNC:30217"/>
    </source>
</evidence>
<evidence type="ECO:0007744" key="9">
    <source>
        <dbReference type="PDB" id="1ZQ9"/>
    </source>
</evidence>
<evidence type="ECO:0007744" key="10">
    <source>
        <dbReference type="PDB" id="7MQA"/>
    </source>
</evidence>
<evidence type="ECO:0007829" key="11">
    <source>
        <dbReference type="PDB" id="1ZQ9"/>
    </source>
</evidence>
<keyword id="KW-0002">3D-structure</keyword>
<keyword id="KW-0489">Methyltransferase</keyword>
<keyword id="KW-0539">Nucleus</keyword>
<keyword id="KW-1267">Proteomics identification</keyword>
<keyword id="KW-1185">Reference proteome</keyword>
<keyword id="KW-0694">RNA-binding</keyword>
<keyword id="KW-0698">rRNA processing</keyword>
<keyword id="KW-0949">S-adenosyl-L-methionine</keyword>
<keyword id="KW-0808">Transferase</keyword>
<reference key="1">
    <citation type="submission" date="1998-10" db="EMBL/GenBank/DDBJ databases">
        <authorList>
            <person name="Wei Y.J."/>
            <person name="Ding J.F."/>
            <person name="Liu Y.Q."/>
            <person name="Xu Y.Y."/>
            <person name="Hui R.T."/>
            <person name="Sheng H."/>
            <person name="Zhao X.W."/>
            <person name="Jiang Y.X."/>
            <person name="Liu D.Q."/>
            <person name="Zhao Y."/>
            <person name="Cao H.Q."/>
            <person name="Meng X.M."/>
            <person name="Liu S."/>
        </authorList>
    </citation>
    <scope>NUCLEOTIDE SEQUENCE [MRNA]</scope>
    <source>
        <tissue>Aorta</tissue>
    </source>
</reference>
<reference key="2">
    <citation type="journal article" date="2004" name="Genome Res.">
        <title>The status, quality, and expansion of the NIH full-length cDNA project: the Mammalian Gene Collection (MGC).</title>
        <authorList>
            <consortium name="The MGC Project Team"/>
        </authorList>
    </citation>
    <scope>NUCLEOTIDE SEQUENCE [LARGE SCALE MRNA]</scope>
    <source>
        <tissue>Lung</tissue>
        <tissue>Placenta</tissue>
    </source>
</reference>
<reference key="3">
    <citation type="journal article" date="2001" name="Yeast">
        <title>Characterization of 16 novel human genes showing high similarity to yeast sequences.</title>
        <authorList>
            <person name="Stanchi F."/>
            <person name="Bertocco E."/>
            <person name="Toppo S."/>
            <person name="Dioguardi R."/>
            <person name="Simionati B."/>
            <person name="Cannata N."/>
            <person name="Zimbello R."/>
            <person name="Lanfranchi G."/>
            <person name="Valle G."/>
        </authorList>
    </citation>
    <scope>NUCLEOTIDE SEQUENCE [MRNA] OF 157-313</scope>
    <source>
        <tissue>Brain</tissue>
    </source>
</reference>
<reference key="4">
    <citation type="submission" date="1998-08" db="EMBL/GenBank/DDBJ databases">
        <title>Full-insert sequence of mapped XREF EST.</title>
        <authorList>
            <person name="Barrow I.K.-P."/>
            <person name="Boguski M.S."/>
            <person name="Touchman J.W."/>
            <person name="Spencer F."/>
        </authorList>
    </citation>
    <scope>NUCLEOTIDE SEQUENCE [LARGE SCALE MRNA] OF 158-313</scope>
</reference>
<reference key="5">
    <citation type="journal article" date="2002" name="Mol. Biol. Cell">
        <title>Functional proteomic analysis of human nucleolus.</title>
        <authorList>
            <person name="Scherl A."/>
            <person name="Coute Y."/>
            <person name="Deon C."/>
            <person name="Calle A."/>
            <person name="Kindbeiter K."/>
            <person name="Sanchez J.-C."/>
            <person name="Greco A."/>
            <person name="Hochstrasser D.F."/>
            <person name="Diaz J.-J."/>
        </authorList>
    </citation>
    <scope>SUBCELLULAR LOCATION [LARGE SCALE ANALYSIS]</scope>
    <source>
        <tissue>Cervix carcinoma</tissue>
    </source>
</reference>
<reference key="6">
    <citation type="journal article" date="2011" name="BMC Syst. Biol.">
        <title>Initial characterization of the human central proteome.</title>
        <authorList>
            <person name="Burkard T.R."/>
            <person name="Planyavsky M."/>
            <person name="Kaupe I."/>
            <person name="Breitwieser F.P."/>
            <person name="Buerckstuemmer T."/>
            <person name="Bennett K.L."/>
            <person name="Superti-Furga G."/>
            <person name="Colinge J."/>
        </authorList>
    </citation>
    <scope>IDENTIFICATION BY MASS SPECTROMETRY [LARGE SCALE ANALYSIS]</scope>
</reference>
<reference key="7">
    <citation type="journal article" date="2012" name="Proc. Natl. Acad. Sci. U.S.A.">
        <title>N-terminal acetylome analyses and functional insights of the N-terminal acetyltransferase NatB.</title>
        <authorList>
            <person name="Van Damme P."/>
            <person name="Lasa M."/>
            <person name="Polevoda B."/>
            <person name="Gazquez C."/>
            <person name="Elosegui-Artola A."/>
            <person name="Kim D.S."/>
            <person name="De Juan-Pardo E."/>
            <person name="Demeyer K."/>
            <person name="Hole K."/>
            <person name="Larrea E."/>
            <person name="Timmerman E."/>
            <person name="Prieto J."/>
            <person name="Arnesen T."/>
            <person name="Sherman F."/>
            <person name="Gevaert K."/>
            <person name="Aldabe R."/>
        </authorList>
    </citation>
    <scope>IDENTIFICATION BY MASS SPECTROMETRY [LARGE SCALE ANALYSIS]</scope>
</reference>
<reference key="8">
    <citation type="journal article" date="2015" name="Mol. Biol. Cell">
        <title>The human 18S rRNA base methyltransferases DIMT1L and WBSCR22-TRMT112 but not rRNA modification are required for ribosome biogenesis.</title>
        <authorList>
            <person name="Zorbas C."/>
            <person name="Nicolas E."/>
            <person name="Wacheul L."/>
            <person name="Huvelle E."/>
            <person name="Heurgue-Hamard V."/>
            <person name="Lafontaine D.L."/>
        </authorList>
    </citation>
    <scope>FUNCTION</scope>
    <scope>CATALYTIC ACTIVITY</scope>
    <scope>SUBCELLULAR LOCATION</scope>
</reference>
<reference evidence="9" key="9">
    <citation type="submission" date="2005-05" db="PDB data bank">
        <title>Crystal structure of human dimethyladenosine transferase with SAM.</title>
        <authorList>
            <consortium name="Structural genomics consortium (SGC)"/>
        </authorList>
    </citation>
    <scope>X-RAY CRYSTALLOGRAPHY (1.90 ANGSTROMS) OF 31-313 IN COMPLEX WITH S-ADENOSYL-L-METHIONINE</scope>
</reference>
<reference evidence="10" key="10">
    <citation type="journal article" date="2021" name="Science">
        <title>Nucleolar maturation of the human small subunit processome.</title>
        <authorList>
            <person name="Singh S."/>
            <person name="Vanden Broeck A."/>
            <person name="Miller L."/>
            <person name="Chaker-Margot M."/>
            <person name="Klinge S."/>
        </authorList>
    </citation>
    <scope>STRUCTURE BY ELECTRON MICROSCOPY (2.70 ANGSTROMS)</scope>
    <scope>FUNCTION</scope>
    <scope>SUBCELLULAR LOCATION</scope>
    <scope>SUBUNIT</scope>
</reference>
<sequence length="313" mass="35236">MPKVKSGAIGRRRGRQEQRRELKSAGGLMFNTGIGQHILKNPLIINSIIDKAALRPTDVVLEVGPGTGNMTVKLLEKAKKVVACELDPRLVAELHKRVQGTPVASKLQVLVGDVLKTDLPFFDTCVANLPYQISSPFVFKLLLHRPFFRCAILMFQREFALRLVAKPGDKLYCRLSINTQLLARVDHLMKVGKNNFRPPPKVESSVVRIEPKNPPPPINFQEWDGLVRITFVRKNKTLSAAFKSSAVQQLLEKNYRIHCSVHNIIIPEDFSIADKIQQILTSTGFSDKRARSMDIDDFIRLLHGFNAEGIHFS</sequence>
<protein>
    <recommendedName>
        <fullName>Dimethyladenosine transferase</fullName>
        <ecNumber evidence="4">2.1.1.183</ecNumber>
    </recommendedName>
    <alternativeName>
        <fullName>18S rRNA (adenine(1779)-N(6)/adenine(1780)-N(6))-dimethyltransferase</fullName>
    </alternativeName>
    <alternativeName>
        <fullName>18S rRNA dimethylase</fullName>
    </alternativeName>
    <alternativeName>
        <fullName>DIM1 dimethyladenosine transferase 1 homolog</fullName>
    </alternativeName>
    <alternativeName>
        <fullName>DIM1 dimethyladenosine transferase 1-like</fullName>
    </alternativeName>
    <alternativeName>
        <fullName>S-adenosylmethionine-6-N',N'-adenosyl(rRNA) dimethyltransferase</fullName>
    </alternativeName>
</protein>
<organism>
    <name type="scientific">Homo sapiens</name>
    <name type="common">Human</name>
    <dbReference type="NCBI Taxonomy" id="9606"/>
    <lineage>
        <taxon>Eukaryota</taxon>
        <taxon>Metazoa</taxon>
        <taxon>Chordata</taxon>
        <taxon>Craniata</taxon>
        <taxon>Vertebrata</taxon>
        <taxon>Euteleostomi</taxon>
        <taxon>Mammalia</taxon>
        <taxon>Eutheria</taxon>
        <taxon>Euarchontoglires</taxon>
        <taxon>Primates</taxon>
        <taxon>Haplorrhini</taxon>
        <taxon>Catarrhini</taxon>
        <taxon>Hominidae</taxon>
        <taxon>Homo</taxon>
    </lineage>
</organism>
<gene>
    <name evidence="8" type="primary">DIMT1</name>
    <name type="synonym">DIMT1L</name>
    <name type="ORF">HUSSY-05</name>
</gene>
<feature type="chain" id="PRO_0000101465" description="Dimethyladenosine transferase">
    <location>
        <begin position="1"/>
        <end position="313"/>
    </location>
</feature>
<feature type="region of interest" description="Disordered" evidence="2">
    <location>
        <begin position="1"/>
        <end position="21"/>
    </location>
</feature>
<feature type="binding site" evidence="1 6">
    <location>
        <position position="37"/>
    </location>
    <ligand>
        <name>S-adenosyl-L-methionine</name>
        <dbReference type="ChEBI" id="CHEBI:59789"/>
    </ligand>
</feature>
<feature type="binding site" evidence="1 6">
    <location>
        <position position="39"/>
    </location>
    <ligand>
        <name>S-adenosyl-L-methionine</name>
        <dbReference type="ChEBI" id="CHEBI:59789"/>
    </ligand>
</feature>
<feature type="binding site" evidence="1 6">
    <location>
        <position position="64"/>
    </location>
    <ligand>
        <name>S-adenosyl-L-methionine</name>
        <dbReference type="ChEBI" id="CHEBI:59789"/>
    </ligand>
</feature>
<feature type="binding site" evidence="1 6">
    <location>
        <position position="85"/>
    </location>
    <ligand>
        <name>S-adenosyl-L-methionine</name>
        <dbReference type="ChEBI" id="CHEBI:59789"/>
    </ligand>
</feature>
<feature type="binding site" evidence="1 6">
    <location>
        <position position="113"/>
    </location>
    <ligand>
        <name>S-adenosyl-L-methionine</name>
        <dbReference type="ChEBI" id="CHEBI:59789"/>
    </ligand>
</feature>
<feature type="binding site" evidence="1 6">
    <location>
        <position position="128"/>
    </location>
    <ligand>
        <name>S-adenosyl-L-methionine</name>
        <dbReference type="ChEBI" id="CHEBI:59789"/>
    </ligand>
</feature>
<feature type="sequence conflict" description="In Ref. 3; CAA08815." evidence="7" ref="3">
    <original>RE</original>
    <variation>EN</variation>
    <location>
        <begin position="157"/>
        <end position="158"/>
    </location>
</feature>
<feature type="sequence conflict" description="In Ref. 2; AAH02841." evidence="7" ref="2">
    <original>IIPEDFSIADK</original>
    <variation>VSAAVYPVKQI</variation>
    <location>
        <begin position="265"/>
        <end position="275"/>
    </location>
</feature>
<feature type="sequence conflict" description="In Ref. 2; AAH02841." evidence="7" ref="2">
    <location>
        <begin position="276"/>
        <end position="313"/>
    </location>
</feature>
<feature type="helix" evidence="11">
    <location>
        <begin position="42"/>
        <end position="51"/>
    </location>
</feature>
<feature type="strand" evidence="11">
    <location>
        <begin position="59"/>
        <end position="63"/>
    </location>
</feature>
<feature type="helix" evidence="11">
    <location>
        <begin position="71"/>
        <end position="77"/>
    </location>
</feature>
<feature type="strand" evidence="11">
    <location>
        <begin position="78"/>
        <end position="86"/>
    </location>
</feature>
<feature type="helix" evidence="11">
    <location>
        <begin position="88"/>
        <end position="98"/>
    </location>
</feature>
<feature type="helix" evidence="11">
    <location>
        <begin position="104"/>
        <end position="106"/>
    </location>
</feature>
<feature type="strand" evidence="11">
    <location>
        <begin position="107"/>
        <end position="112"/>
    </location>
</feature>
<feature type="turn" evidence="11">
    <location>
        <begin position="114"/>
        <end position="116"/>
    </location>
</feature>
<feature type="strand" evidence="11">
    <location>
        <begin position="123"/>
        <end position="128"/>
    </location>
</feature>
<feature type="helix" evidence="11">
    <location>
        <begin position="131"/>
        <end position="133"/>
    </location>
</feature>
<feature type="helix" evidence="11">
    <location>
        <begin position="134"/>
        <end position="143"/>
    </location>
</feature>
<feature type="strand" evidence="11">
    <location>
        <begin position="149"/>
        <end position="156"/>
    </location>
</feature>
<feature type="helix" evidence="11">
    <location>
        <begin position="157"/>
        <end position="164"/>
    </location>
</feature>
<feature type="helix" evidence="11">
    <location>
        <begin position="174"/>
        <end position="182"/>
    </location>
</feature>
<feature type="strand" evidence="11">
    <location>
        <begin position="183"/>
        <end position="191"/>
    </location>
</feature>
<feature type="helix" evidence="11">
    <location>
        <begin position="193"/>
        <end position="195"/>
    </location>
</feature>
<feature type="strand" evidence="11">
    <location>
        <begin position="196"/>
        <end position="198"/>
    </location>
</feature>
<feature type="strand" evidence="11">
    <location>
        <begin position="204"/>
        <end position="211"/>
    </location>
</feature>
<feature type="helix" evidence="11">
    <location>
        <begin position="220"/>
        <end position="231"/>
    </location>
</feature>
<feature type="turn" evidence="11">
    <location>
        <begin position="232"/>
        <end position="235"/>
    </location>
</feature>
<feature type="helix" evidence="11">
    <location>
        <begin position="238"/>
        <end position="241"/>
    </location>
</feature>
<feature type="helix" evidence="11">
    <location>
        <begin position="245"/>
        <end position="262"/>
    </location>
</feature>
<feature type="helix" evidence="11">
    <location>
        <begin position="272"/>
        <end position="282"/>
    </location>
</feature>
<feature type="helix" evidence="11">
    <location>
        <begin position="290"/>
        <end position="292"/>
    </location>
</feature>
<feature type="helix" evidence="11">
    <location>
        <begin position="295"/>
        <end position="306"/>
    </location>
</feature>
<feature type="turn" evidence="11">
    <location>
        <begin position="307"/>
        <end position="309"/>
    </location>
</feature>
<name>DIM1_HUMAN</name>
<accession>Q9UNQ2</accession>
<accession>O76025</accession>
<accession>Q9BU77</accession>
<accession>Q9UES1</accession>
<proteinExistence type="evidence at protein level"/>
<comment type="function">
    <text evidence="4 5">Specifically dimethylates two adjacent adenosines in the loop of a conserved hairpin near the 3'-end of 18S rRNA in the 40S particle (PubMed:25851604). Involved in the pre-rRNA processing steps leading to small-subunit rRNA production independently of its RNA-modifying catalytic activity (PubMed:25851604). Part of the small subunit (SSU) processome, first precursor of the small eukaryotic ribosomal subunit. During the assembly of the SSU processome in the nucleolus, many ribosome biogenesis factors, an RNA chaperone and ribosomal proteins associate with the nascent pre-rRNA and work in concert to generate RNA folding, modifications, rearrangements and cleavage as well as targeted degradation of pre-ribosomal RNA by the RNA exosome (PubMed:34516797).</text>
</comment>
<comment type="catalytic activity">
    <reaction evidence="4">
        <text>adenosine(1779)/adenosine(1780) in 18S rRNA + 4 S-adenosyl-L-methionine = N(6)-dimethyladenosine(1779)/N(6)-dimethyladenosine(1780) in 18S rRNA + 4 S-adenosyl-L-homocysteine + 4 H(+)</text>
        <dbReference type="Rhea" id="RHEA:42780"/>
        <dbReference type="Rhea" id="RHEA-COMP:10234"/>
        <dbReference type="Rhea" id="RHEA-COMP:10236"/>
        <dbReference type="ChEBI" id="CHEBI:15378"/>
        <dbReference type="ChEBI" id="CHEBI:57856"/>
        <dbReference type="ChEBI" id="CHEBI:59789"/>
        <dbReference type="ChEBI" id="CHEBI:74411"/>
        <dbReference type="ChEBI" id="CHEBI:74493"/>
        <dbReference type="EC" id="2.1.1.183"/>
    </reaction>
</comment>
<comment type="subunit">
    <text evidence="5">Part of the small subunit (SSU) processome, composed of more than 70 proteins and the RNA chaperone small nucleolar RNA (snoRNA) U3.</text>
</comment>
<comment type="subcellular location">
    <subcellularLocation>
        <location evidence="4">Nucleus</location>
        <location evidence="4">Nucleoplasm</location>
    </subcellularLocation>
    <subcellularLocation>
        <location evidence="3 4 5">Nucleus</location>
        <location evidence="3 4 5">Nucleolus</location>
    </subcellularLocation>
</comment>
<comment type="similarity">
    <text evidence="1">Belongs to the class I-like SAM-binding methyltransferase superfamily. rRNA adenine N(6)-methyltransferase family.</text>
</comment>
<comment type="sequence caution" evidence="7">
    <conflict type="miscellaneous discrepancy">
        <sequence resource="EMBL-CDS" id="AAC72947"/>
    </conflict>
    <text>Contaminating sequence. Sequence of unknown origin in the N-terminal part.</text>
</comment>
<dbReference type="EC" id="2.1.1.183" evidence="4"/>
<dbReference type="EMBL" id="AF102147">
    <property type="protein sequence ID" value="AAC97955.1"/>
    <property type="molecule type" value="mRNA"/>
</dbReference>
<dbReference type="EMBL" id="BC002841">
    <property type="protein sequence ID" value="AAH02841.1"/>
    <property type="molecule type" value="mRNA"/>
</dbReference>
<dbReference type="EMBL" id="BC010874">
    <property type="protein sequence ID" value="AAH10874.1"/>
    <property type="molecule type" value="mRNA"/>
</dbReference>
<dbReference type="EMBL" id="AJ009761">
    <property type="protein sequence ID" value="CAA08815.1"/>
    <property type="molecule type" value="mRNA"/>
</dbReference>
<dbReference type="EMBL" id="AF091078">
    <property type="protein sequence ID" value="AAC72947.1"/>
    <property type="status" value="ALT_SEQ"/>
    <property type="molecule type" value="mRNA"/>
</dbReference>
<dbReference type="CCDS" id="CCDS3981.1"/>
<dbReference type="RefSeq" id="NP_001335005.1">
    <property type="nucleotide sequence ID" value="NM_001348076.1"/>
</dbReference>
<dbReference type="RefSeq" id="NP_055288.1">
    <property type="nucleotide sequence ID" value="NM_014473.4"/>
</dbReference>
<dbReference type="PDB" id="1ZQ9">
    <property type="method" value="X-ray"/>
    <property type="resolution" value="1.90 A"/>
    <property type="chains" value="A/B=31-313"/>
</dbReference>
<dbReference type="PDB" id="6W6C">
    <property type="method" value="X-ray"/>
    <property type="resolution" value="2.38 A"/>
    <property type="chains" value="A/B=1-313"/>
</dbReference>
<dbReference type="PDB" id="6W6F">
    <property type="method" value="X-ray"/>
    <property type="resolution" value="3.20 A"/>
    <property type="chains" value="A/B=1-313"/>
</dbReference>
<dbReference type="PDB" id="7MQA">
    <property type="method" value="EM"/>
    <property type="resolution" value="2.70 A"/>
    <property type="chains" value="NL=1-313"/>
</dbReference>
<dbReference type="PDB" id="7WTS">
    <property type="method" value="EM"/>
    <property type="resolution" value="3.20 A"/>
    <property type="chains" value="3=1-313"/>
</dbReference>
<dbReference type="PDBsum" id="1ZQ9"/>
<dbReference type="PDBsum" id="6W6C"/>
<dbReference type="PDBsum" id="6W6F"/>
<dbReference type="PDBsum" id="7MQA"/>
<dbReference type="PDBsum" id="7WTS"/>
<dbReference type="EMDB" id="EMD-23938"/>
<dbReference type="EMDB" id="EMD-32799"/>
<dbReference type="SMR" id="Q9UNQ2"/>
<dbReference type="BioGRID" id="118116">
    <property type="interactions" value="206"/>
</dbReference>
<dbReference type="FunCoup" id="Q9UNQ2">
    <property type="interactions" value="2423"/>
</dbReference>
<dbReference type="IntAct" id="Q9UNQ2">
    <property type="interactions" value="69"/>
</dbReference>
<dbReference type="MINT" id="Q9UNQ2"/>
<dbReference type="STRING" id="9606.ENSP00000199320"/>
<dbReference type="GlyCosmos" id="Q9UNQ2">
    <property type="glycosylation" value="3 sites, 1 glycan"/>
</dbReference>
<dbReference type="GlyGen" id="Q9UNQ2">
    <property type="glycosylation" value="3 sites, 1 O-linked glycan (3 sites)"/>
</dbReference>
<dbReference type="iPTMnet" id="Q9UNQ2"/>
<dbReference type="PhosphoSitePlus" id="Q9UNQ2"/>
<dbReference type="SwissPalm" id="Q9UNQ2"/>
<dbReference type="BioMuta" id="DIMT1"/>
<dbReference type="DMDM" id="27151492"/>
<dbReference type="jPOST" id="Q9UNQ2"/>
<dbReference type="MassIVE" id="Q9UNQ2"/>
<dbReference type="PaxDb" id="9606-ENSP00000199320"/>
<dbReference type="PeptideAtlas" id="Q9UNQ2"/>
<dbReference type="ProteomicsDB" id="85325"/>
<dbReference type="Pumba" id="Q9UNQ2"/>
<dbReference type="Antibodypedia" id="23684">
    <property type="antibodies" value="161 antibodies from 25 providers"/>
</dbReference>
<dbReference type="DNASU" id="27292"/>
<dbReference type="Ensembl" id="ENST00000199320.9">
    <property type="protein sequence ID" value="ENSP00000199320.4"/>
    <property type="gene ID" value="ENSG00000086189.11"/>
</dbReference>
<dbReference type="GeneID" id="27292"/>
<dbReference type="KEGG" id="hsa:27292"/>
<dbReference type="MANE-Select" id="ENST00000199320.9">
    <property type="protein sequence ID" value="ENSP00000199320.4"/>
    <property type="RefSeq nucleotide sequence ID" value="NM_014473.4"/>
    <property type="RefSeq protein sequence ID" value="NP_055288.1"/>
</dbReference>
<dbReference type="UCSC" id="uc003jta.4">
    <property type="organism name" value="human"/>
</dbReference>
<dbReference type="AGR" id="HGNC:30217"/>
<dbReference type="CTD" id="27292"/>
<dbReference type="DisGeNET" id="27292"/>
<dbReference type="GeneCards" id="DIMT1"/>
<dbReference type="HGNC" id="HGNC:30217">
    <property type="gene designation" value="DIMT1"/>
</dbReference>
<dbReference type="HPA" id="ENSG00000086189">
    <property type="expression patterns" value="Low tissue specificity"/>
</dbReference>
<dbReference type="MIM" id="612499">
    <property type="type" value="gene"/>
</dbReference>
<dbReference type="neXtProt" id="NX_Q9UNQ2"/>
<dbReference type="OpenTargets" id="ENSG00000086189"/>
<dbReference type="PharmGKB" id="PA162383599"/>
<dbReference type="VEuPathDB" id="HostDB:ENSG00000086189"/>
<dbReference type="eggNOG" id="KOG0820">
    <property type="taxonomic scope" value="Eukaryota"/>
</dbReference>
<dbReference type="GeneTree" id="ENSGT00950000183142"/>
<dbReference type="InParanoid" id="Q9UNQ2"/>
<dbReference type="OMA" id="GMFQKEV"/>
<dbReference type="OrthoDB" id="74991at2759"/>
<dbReference type="PAN-GO" id="Q9UNQ2">
    <property type="GO annotations" value="3 GO annotations based on evolutionary models"/>
</dbReference>
<dbReference type="PhylomeDB" id="Q9UNQ2"/>
<dbReference type="TreeFam" id="TF354255"/>
<dbReference type="PathwayCommons" id="Q9UNQ2"/>
<dbReference type="Reactome" id="R-HSA-6790901">
    <property type="pathway name" value="rRNA modification in the nucleus and cytosol"/>
</dbReference>
<dbReference type="SignaLink" id="Q9UNQ2"/>
<dbReference type="BioGRID-ORCS" id="27292">
    <property type="hits" value="637 hits in 1164 CRISPR screens"/>
</dbReference>
<dbReference type="CD-CODE" id="232F8A39">
    <property type="entry name" value="P-body"/>
</dbReference>
<dbReference type="CD-CODE" id="91857CE7">
    <property type="entry name" value="Nucleolus"/>
</dbReference>
<dbReference type="ChiTaRS" id="DIMT1">
    <property type="organism name" value="human"/>
</dbReference>
<dbReference type="EvolutionaryTrace" id="Q9UNQ2"/>
<dbReference type="GenomeRNAi" id="27292"/>
<dbReference type="Pharos" id="Q9UNQ2">
    <property type="development level" value="Tbio"/>
</dbReference>
<dbReference type="PRO" id="PR:Q9UNQ2"/>
<dbReference type="Proteomes" id="UP000005640">
    <property type="component" value="Chromosome 5"/>
</dbReference>
<dbReference type="RNAct" id="Q9UNQ2">
    <property type="molecule type" value="protein"/>
</dbReference>
<dbReference type="Bgee" id="ENSG00000086189">
    <property type="expression patterns" value="Expressed in medial globus pallidus and 206 other cell types or tissues"/>
</dbReference>
<dbReference type="ExpressionAtlas" id="Q9UNQ2">
    <property type="expression patterns" value="baseline and differential"/>
</dbReference>
<dbReference type="GO" id="GO:0005829">
    <property type="term" value="C:cytosol"/>
    <property type="evidence" value="ECO:0000314"/>
    <property type="project" value="HPA"/>
</dbReference>
<dbReference type="GO" id="GO:0005730">
    <property type="term" value="C:nucleolus"/>
    <property type="evidence" value="ECO:0000314"/>
    <property type="project" value="UniProtKB"/>
</dbReference>
<dbReference type="GO" id="GO:0005654">
    <property type="term" value="C:nucleoplasm"/>
    <property type="evidence" value="ECO:0000314"/>
    <property type="project" value="HPA"/>
</dbReference>
<dbReference type="GO" id="GO:0032040">
    <property type="term" value="C:small-subunit processome"/>
    <property type="evidence" value="ECO:0000314"/>
    <property type="project" value="UniProtKB"/>
</dbReference>
<dbReference type="GO" id="GO:0052909">
    <property type="term" value="F:18S rRNA (adenine(1779)-N(6)/adenine(1780)-N(6))-dimethyltransferase activity"/>
    <property type="evidence" value="ECO:0000315"/>
    <property type="project" value="UniProtKB"/>
</dbReference>
<dbReference type="GO" id="GO:0003723">
    <property type="term" value="F:RNA binding"/>
    <property type="evidence" value="ECO:0007005"/>
    <property type="project" value="UniProtKB"/>
</dbReference>
<dbReference type="GO" id="GO:0000179">
    <property type="term" value="F:rRNA (adenine-N6,N6-)-dimethyltransferase activity"/>
    <property type="evidence" value="ECO:0000269"/>
    <property type="project" value="Reactome"/>
</dbReference>
<dbReference type="GO" id="GO:2000234">
    <property type="term" value="P:positive regulation of rRNA processing"/>
    <property type="evidence" value="ECO:0000315"/>
    <property type="project" value="UniProtKB"/>
</dbReference>
<dbReference type="GO" id="GO:0042274">
    <property type="term" value="P:ribosomal small subunit biogenesis"/>
    <property type="evidence" value="ECO:0000314"/>
    <property type="project" value="UniProtKB"/>
</dbReference>
<dbReference type="GO" id="GO:0031167">
    <property type="term" value="P:rRNA methylation"/>
    <property type="evidence" value="ECO:0000315"/>
    <property type="project" value="UniProtKB"/>
</dbReference>
<dbReference type="CDD" id="cd02440">
    <property type="entry name" value="AdoMet_MTases"/>
    <property type="match status" value="1"/>
</dbReference>
<dbReference type="FunFam" id="1.10.8.480:FF:000001">
    <property type="entry name" value="rRNA adenine N(6)-methyltransferase"/>
    <property type="match status" value="1"/>
</dbReference>
<dbReference type="FunFam" id="3.40.50.150:FF:000007">
    <property type="entry name" value="rRNA adenine N(6)-methyltransferase"/>
    <property type="match status" value="1"/>
</dbReference>
<dbReference type="Gene3D" id="1.10.8.480">
    <property type="match status" value="1"/>
</dbReference>
<dbReference type="Gene3D" id="3.40.50.150">
    <property type="entry name" value="Vaccinia Virus protein VP39"/>
    <property type="match status" value="1"/>
</dbReference>
<dbReference type="InterPro" id="IPR001737">
    <property type="entry name" value="KsgA/Erm"/>
</dbReference>
<dbReference type="InterPro" id="IPR020596">
    <property type="entry name" value="rRNA_Ade_Mease_Trfase_CS"/>
</dbReference>
<dbReference type="InterPro" id="IPR020598">
    <property type="entry name" value="rRNA_Ade_methylase_Trfase_N"/>
</dbReference>
<dbReference type="InterPro" id="IPR011530">
    <property type="entry name" value="rRNA_adenine_dimethylase"/>
</dbReference>
<dbReference type="InterPro" id="IPR029063">
    <property type="entry name" value="SAM-dependent_MTases_sf"/>
</dbReference>
<dbReference type="NCBIfam" id="TIGR00755">
    <property type="entry name" value="ksgA"/>
    <property type="match status" value="1"/>
</dbReference>
<dbReference type="PANTHER" id="PTHR11727">
    <property type="entry name" value="DIMETHYLADENOSINE TRANSFERASE"/>
    <property type="match status" value="1"/>
</dbReference>
<dbReference type="PANTHER" id="PTHR11727:SF7">
    <property type="entry name" value="DIMETHYLADENOSINE TRANSFERASE-RELATED"/>
    <property type="match status" value="1"/>
</dbReference>
<dbReference type="Pfam" id="PF00398">
    <property type="entry name" value="RrnaAD"/>
    <property type="match status" value="1"/>
</dbReference>
<dbReference type="SMART" id="SM00650">
    <property type="entry name" value="rADc"/>
    <property type="match status" value="1"/>
</dbReference>
<dbReference type="SUPFAM" id="SSF53335">
    <property type="entry name" value="S-adenosyl-L-methionine-dependent methyltransferases"/>
    <property type="match status" value="1"/>
</dbReference>
<dbReference type="PROSITE" id="PS01131">
    <property type="entry name" value="RRNA_A_DIMETH"/>
    <property type="match status" value="1"/>
</dbReference>
<dbReference type="PROSITE" id="PS51689">
    <property type="entry name" value="SAM_RNA_A_N6_MT"/>
    <property type="match status" value="1"/>
</dbReference>